<proteinExistence type="inferred from homology"/>
<comment type="function">
    <text evidence="1">Capsid vertex-specific component that plays a role during viral DNA encapsidation, assuring correct genome cleavage and presumably stabilizing capsids that contain full-length viral genomes.</text>
</comment>
<comment type="subunit">
    <text evidence="1">Interacts (via C-terminus) with capsid vertex component 2/CVC2.</text>
</comment>
<comment type="subcellular location">
    <subcellularLocation>
        <location evidence="1">Virion</location>
    </subcellularLocation>
    <subcellularLocation>
        <location evidence="1">Host nucleus</location>
    </subcellularLocation>
</comment>
<comment type="similarity">
    <text evidence="1">Belongs to the herpesviridae CVC1 protein family.</text>
</comment>
<sequence length="706" mass="76321">MDAHIANETKHLLVHGNSKTRALVHIIVPDACLKKAGVDPVKLSDRHRASPSAAPVFRVFAQTRYHATGECSLWRTVFAGYVPSGAIVSALVPTVPADHPRLFQSTPDSGGLFVSLEIECDADGRFDAFTLVALRVDIADDPRTTEVLFTYDELLPPGTRYGADSKRVALLCRQFVAYVNSHPTVSQSAVTAASHIEAAVAEDVKSASGPQVSYGARIDPAEYLFSGGGFDNHQALARLEDDDKEIMSLIRRASEVIAKRNPVRVLSNPEVNGDAHRRQCVASGLRQGARGAHASDSHARVGFNSSIHDATALLLGLEPPDSGRFVNSGPQRHLPPQGPRSPASRDCQSGMLDDVLLLTPENSNPLTPLDWLDVGHAAVAGGDTPRDVWRRRPISLVARKHYGTCETFVVVSYENSTAWGGRRARDEHLAGSINPPVMQACVAAGVDHPRNLPPETRGELIAKFPMLTVPLGDTPPPVAAFDAAAELALIDHFRGACVSALLKAISERLRAEPRMSQLIEYDIPNNNRDCIISVAQRAPELLEAVALAIQNVTVTEFCNSALMLSALSHLNILSGNKRGRLPYHRSWLPSLAGGADAFLFDYYSSGGEVVKVSPVPLAILVTATRTGQHSCRFARGAPDSSSKTYERYLPGECYAYICVGLNRSFEALVVLPGGFACRASAARKLAWPAHLVEPILERYCWTIPSH</sequence>
<gene>
    <name evidence="1" type="primary">CVC1</name>
    <name type="ordered locus">45</name>
</gene>
<organismHost>
    <name type="scientific">Equus caballus</name>
    <name type="common">Horse</name>
    <dbReference type="NCBI Taxonomy" id="9796"/>
</organismHost>
<protein>
    <recommendedName>
        <fullName evidence="1">Capsid vertex component 1</fullName>
    </recommendedName>
</protein>
<dbReference type="EMBL" id="AY665713">
    <property type="protein sequence ID" value="AAT67303.1"/>
    <property type="molecule type" value="Genomic_DNA"/>
</dbReference>
<dbReference type="PIR" id="A36800">
    <property type="entry name" value="WZBED8"/>
</dbReference>
<dbReference type="SMR" id="P28950"/>
<dbReference type="KEGG" id="vg:1487537"/>
<dbReference type="Proteomes" id="UP000001189">
    <property type="component" value="Segment"/>
</dbReference>
<dbReference type="GO" id="GO:0042025">
    <property type="term" value="C:host cell nucleus"/>
    <property type="evidence" value="ECO:0007669"/>
    <property type="project" value="UniProtKB-SubCell"/>
</dbReference>
<dbReference type="GO" id="GO:0019028">
    <property type="term" value="C:viral capsid"/>
    <property type="evidence" value="ECO:0007669"/>
    <property type="project" value="UniProtKB-KW"/>
</dbReference>
<dbReference type="GO" id="GO:0051276">
    <property type="term" value="P:chromosome organization"/>
    <property type="evidence" value="ECO:0007669"/>
    <property type="project" value="InterPro"/>
</dbReference>
<dbReference type="HAMAP" id="MF_04017">
    <property type="entry name" value="HSV_CVC1"/>
    <property type="match status" value="1"/>
</dbReference>
<dbReference type="InterPro" id="IPR007640">
    <property type="entry name" value="UL17-like"/>
</dbReference>
<dbReference type="Pfam" id="PF04559">
    <property type="entry name" value="Herpes_UL17"/>
    <property type="match status" value="1"/>
</dbReference>
<organism>
    <name type="scientific">Equine herpesvirus 1 (strain Ab4p)</name>
    <name type="common">EHV-1</name>
    <name type="synonym">Equine abortion virus</name>
    <dbReference type="NCBI Taxonomy" id="31520"/>
    <lineage>
        <taxon>Viruses</taxon>
        <taxon>Duplodnaviria</taxon>
        <taxon>Heunggongvirae</taxon>
        <taxon>Peploviricota</taxon>
        <taxon>Herviviricetes</taxon>
        <taxon>Herpesvirales</taxon>
        <taxon>Orthoherpesviridae</taxon>
        <taxon>Alphaherpesvirinae</taxon>
        <taxon>Varicellovirus</taxon>
        <taxon>Varicellovirus equidalpha1</taxon>
        <taxon>Equid alphaherpesvirus 1</taxon>
    </lineage>
</organism>
<feature type="chain" id="PRO_0000115961" description="Capsid vertex component 1">
    <location>
        <begin position="1"/>
        <end position="706"/>
    </location>
</feature>
<feature type="region of interest" description="Disordered" evidence="2">
    <location>
        <begin position="321"/>
        <end position="347"/>
    </location>
</feature>
<reference key="1">
    <citation type="journal article" date="1992" name="Virology">
        <title>The DNA sequence of equine herpesvirus-1.</title>
        <authorList>
            <person name="Telford E.A.R."/>
            <person name="Watson M.S."/>
            <person name="McBride K."/>
            <person name="Davison A.J."/>
        </authorList>
    </citation>
    <scope>NUCLEOTIDE SEQUENCE [LARGE SCALE GENOMIC DNA]</scope>
</reference>
<evidence type="ECO:0000255" key="1">
    <source>
        <dbReference type="HAMAP-Rule" id="MF_04017"/>
    </source>
</evidence>
<evidence type="ECO:0000256" key="2">
    <source>
        <dbReference type="SAM" id="MobiDB-lite"/>
    </source>
</evidence>
<name>CVC1_EHV1B</name>
<accession>P28950</accession>
<accession>Q6DLG5</accession>
<keyword id="KW-0167">Capsid protein</keyword>
<keyword id="KW-1048">Host nucleus</keyword>
<keyword id="KW-0426">Late protein</keyword>
<keyword id="KW-1185">Reference proteome</keyword>
<keyword id="KW-0231">Viral genome packaging</keyword>
<keyword id="KW-1188">Viral release from host cell</keyword>
<keyword id="KW-0946">Virion</keyword>